<protein>
    <recommendedName>
        <fullName evidence="1">Probable lipid II flippase MurJ</fullName>
    </recommendedName>
</protein>
<organism>
    <name type="scientific">Salmonella typhimurium (strain LT2 / SGSC1412 / ATCC 700720)</name>
    <dbReference type="NCBI Taxonomy" id="99287"/>
    <lineage>
        <taxon>Bacteria</taxon>
        <taxon>Pseudomonadati</taxon>
        <taxon>Pseudomonadota</taxon>
        <taxon>Gammaproteobacteria</taxon>
        <taxon>Enterobacterales</taxon>
        <taxon>Enterobacteriaceae</taxon>
        <taxon>Salmonella</taxon>
    </lineage>
</organism>
<feature type="chain" id="PRO_0000182014" description="Probable lipid II flippase MurJ">
    <location>
        <begin position="1"/>
        <end position="524"/>
    </location>
</feature>
<feature type="transmembrane region" description="Helical" evidence="1">
    <location>
        <begin position="44"/>
        <end position="64"/>
    </location>
</feature>
<feature type="transmembrane region" description="Helical" evidence="1">
    <location>
        <begin position="103"/>
        <end position="123"/>
    </location>
</feature>
<feature type="transmembrane region" description="Helical" evidence="1">
    <location>
        <begin position="146"/>
        <end position="166"/>
    </location>
</feature>
<feature type="transmembrane region" description="Helical" evidence="1">
    <location>
        <begin position="172"/>
        <end position="192"/>
    </location>
</feature>
<feature type="transmembrane region" description="Helical" evidence="1">
    <location>
        <begin position="195"/>
        <end position="215"/>
    </location>
</feature>
<feature type="transmembrane region" description="Helical" evidence="1">
    <location>
        <begin position="250"/>
        <end position="270"/>
    </location>
</feature>
<feature type="transmembrane region" description="Helical" evidence="1">
    <location>
        <begin position="284"/>
        <end position="304"/>
    </location>
</feature>
<feature type="transmembrane region" description="Helical" evidence="1">
    <location>
        <begin position="322"/>
        <end position="342"/>
    </location>
</feature>
<feature type="transmembrane region" description="Helical" evidence="1">
    <location>
        <begin position="367"/>
        <end position="387"/>
    </location>
</feature>
<feature type="transmembrane region" description="Helical" evidence="1">
    <location>
        <begin position="396"/>
        <end position="416"/>
    </location>
</feature>
<feature type="transmembrane region" description="Helical" evidence="1">
    <location>
        <begin position="420"/>
        <end position="440"/>
    </location>
</feature>
<feature type="transmembrane region" description="Helical" evidence="1">
    <location>
        <begin position="456"/>
        <end position="476"/>
    </location>
</feature>
<feature type="transmembrane region" description="Helical" evidence="1">
    <location>
        <begin position="494"/>
        <end position="514"/>
    </location>
</feature>
<name>MURJ_SALTY</name>
<proteinExistence type="evidence at protein level"/>
<comment type="function">
    <text evidence="1">Involved in peptidoglycan biosynthesis. Transports lipid-linked peptidoglycan precursors from the inner to the outer leaflet of the cytoplasmic membrane.</text>
</comment>
<comment type="pathway">
    <text evidence="1">Cell wall biogenesis; peptidoglycan biosynthesis.</text>
</comment>
<comment type="subcellular location">
    <subcellularLocation>
        <location evidence="1">Cell inner membrane</location>
        <topology evidence="1">Multi-pass membrane protein</topology>
    </subcellularLocation>
</comment>
<comment type="similarity">
    <text evidence="1">Belongs to the MurJ/MviN family.</text>
</comment>
<comment type="caution">
    <text evidence="2 3">Was originally (PubMed:2680969) thought to be involved in mouse virulence. It was later shown that the mutation responsible for the virulence phenotype maps to nearby genes (PubMed:8288531).</text>
</comment>
<gene>
    <name evidence="1" type="primary">murJ</name>
    <name type="synonym">mviB</name>
    <name type="synonym">mviN</name>
    <name type="synonym">mviS</name>
    <name type="ordered locus">STM1170</name>
</gene>
<dbReference type="EMBL" id="Z26133">
    <property type="protein sequence ID" value="CAA81134.1"/>
    <property type="molecule type" value="Genomic_DNA"/>
</dbReference>
<dbReference type="EMBL" id="D25292">
    <property type="protein sequence ID" value="BAA04980.1"/>
    <property type="molecule type" value="Genomic_DNA"/>
</dbReference>
<dbReference type="EMBL" id="AE006468">
    <property type="protein sequence ID" value="AAL20100.1"/>
    <property type="molecule type" value="Genomic_DNA"/>
</dbReference>
<dbReference type="PIR" id="S40271">
    <property type="entry name" value="S40271"/>
</dbReference>
<dbReference type="RefSeq" id="NP_460141.1">
    <property type="nucleotide sequence ID" value="NC_003197.2"/>
</dbReference>
<dbReference type="RefSeq" id="WP_001155214.1">
    <property type="nucleotide sequence ID" value="NC_003197.2"/>
</dbReference>
<dbReference type="SMR" id="P37169"/>
<dbReference type="STRING" id="99287.STM1170"/>
<dbReference type="TCDB" id="2.A.66.4.1">
    <property type="family name" value="the multidrug/oligosaccharidyl-lipid/polysaccharide (mop) flippase superfamily"/>
</dbReference>
<dbReference type="PaxDb" id="99287-STM1170"/>
<dbReference type="GeneID" id="1252688"/>
<dbReference type="KEGG" id="stm:STM1170"/>
<dbReference type="PATRIC" id="fig|99287.12.peg.1238"/>
<dbReference type="HOGENOM" id="CLU_006797_5_3_6"/>
<dbReference type="OMA" id="INFWYLL"/>
<dbReference type="PhylomeDB" id="P37169"/>
<dbReference type="BioCyc" id="SENT99287:STM1170-MONOMER"/>
<dbReference type="UniPathway" id="UPA00219"/>
<dbReference type="Proteomes" id="UP000001014">
    <property type="component" value="Chromosome"/>
</dbReference>
<dbReference type="GO" id="GO:0005886">
    <property type="term" value="C:plasma membrane"/>
    <property type="evidence" value="ECO:0000318"/>
    <property type="project" value="GO_Central"/>
</dbReference>
<dbReference type="GO" id="GO:0015648">
    <property type="term" value="F:lipid-linked peptidoglycan transporter activity"/>
    <property type="evidence" value="ECO:0000318"/>
    <property type="project" value="GO_Central"/>
</dbReference>
<dbReference type="GO" id="GO:0071555">
    <property type="term" value="P:cell wall organization"/>
    <property type="evidence" value="ECO:0007669"/>
    <property type="project" value="UniProtKB-KW"/>
</dbReference>
<dbReference type="GO" id="GO:0034204">
    <property type="term" value="P:lipid translocation"/>
    <property type="evidence" value="ECO:0000318"/>
    <property type="project" value="GO_Central"/>
</dbReference>
<dbReference type="GO" id="GO:0015836">
    <property type="term" value="P:lipid-linked peptidoglycan transport"/>
    <property type="evidence" value="ECO:0000318"/>
    <property type="project" value="GO_Central"/>
</dbReference>
<dbReference type="GO" id="GO:0009252">
    <property type="term" value="P:peptidoglycan biosynthetic process"/>
    <property type="evidence" value="ECO:0000318"/>
    <property type="project" value="GO_Central"/>
</dbReference>
<dbReference type="GO" id="GO:0008360">
    <property type="term" value="P:regulation of cell shape"/>
    <property type="evidence" value="ECO:0007669"/>
    <property type="project" value="UniProtKB-KW"/>
</dbReference>
<dbReference type="CDD" id="cd13123">
    <property type="entry name" value="MATE_MurJ_like"/>
    <property type="match status" value="1"/>
</dbReference>
<dbReference type="HAMAP" id="MF_02078">
    <property type="entry name" value="MurJ_MviN"/>
    <property type="match status" value="1"/>
</dbReference>
<dbReference type="InterPro" id="IPR051050">
    <property type="entry name" value="Lipid_II_flippase_MurJ/MviN"/>
</dbReference>
<dbReference type="InterPro" id="IPR004268">
    <property type="entry name" value="MurJ"/>
</dbReference>
<dbReference type="NCBIfam" id="TIGR01695">
    <property type="entry name" value="murJ_mviN"/>
    <property type="match status" value="1"/>
</dbReference>
<dbReference type="PANTHER" id="PTHR47019">
    <property type="entry name" value="LIPID II FLIPPASE MURJ"/>
    <property type="match status" value="1"/>
</dbReference>
<dbReference type="PANTHER" id="PTHR47019:SF1">
    <property type="entry name" value="LIPID II FLIPPASE MURJ"/>
    <property type="match status" value="1"/>
</dbReference>
<dbReference type="Pfam" id="PF03023">
    <property type="entry name" value="MurJ"/>
    <property type="match status" value="1"/>
</dbReference>
<dbReference type="PIRSF" id="PIRSF002869">
    <property type="entry name" value="MviN"/>
    <property type="match status" value="1"/>
</dbReference>
<dbReference type="PRINTS" id="PR01806">
    <property type="entry name" value="VIRFACTRMVIN"/>
</dbReference>
<sequence>MQEFYARVWNTKEMNLLKSLAAVSSMTMFSRVLGFARDAIVARIFGAGMATDAFFVAFKLPNLLRRIFAEGAFSQAFVPILAEYKSKQGEEATRIFVAYVSGLLTLALAVVTVAGMLAAPWVIMVTAPGFADTADKFALTTQLLRITFPYILLISLASLVGAILNTWNRFSIPAFAPTFLNISMIGFALFAAPYFNPPVLALAWAVTVGGVLQLVYQLPYLKKIGMLVLPRINFRDTGAMRVVKQMGPAILGVSVSQISLIINTIFASFLASGSVSWMYYADRLMEFPSGVLGVALGTILLPSLSKSFASGNHDEYCRLMDWGLRLCFLLALPSAVALGILAKPLTVSLFQYGKFTAFDAAMTQRALIAYSVGLIGLIVVKVLAPGFYSRQDIKTPVKIAIVTLIMTQLMNLAFIGPLKHAGLSLSIGLAACLNASLLYWQLRKQNIFTPQPGWMWFLMRLIISVLVMAAVLFGVLHIMPEWSQGSMLWRLLRLMAVVIAGIAAYFAALAVLGFKVKEFVRRTA</sequence>
<accession>P37169</accession>
<reference key="1">
    <citation type="submission" date="1993-09" db="EMBL/GenBank/DDBJ databases">
        <authorList>
            <person name="van Slooten J.-C."/>
            <person name="Okada T."/>
            <person name="Kutsukake K."/>
            <person name="Pechere J.-C."/>
            <person name="Harayama S."/>
        </authorList>
    </citation>
    <scope>NUCLEOTIDE SEQUENCE [GENOMIC DNA]</scope>
    <source>
        <strain>LT2 / KK1004</strain>
    </source>
</reference>
<reference key="2">
    <citation type="journal article" date="1994" name="Gene">
        <title>Sequence analysis of the flgA gene and its adjacent region in Salmonella typhimurium, and identification of another flagellar gene, flgN.</title>
        <authorList>
            <person name="Kutsukake K."/>
            <person name="Okada T."/>
            <person name="Yokoseki T."/>
            <person name="Iino T."/>
        </authorList>
    </citation>
    <scope>NUCLEOTIDE SEQUENCE [GENOMIC DNA]</scope>
    <source>
        <strain>LT2</strain>
    </source>
</reference>
<reference key="3">
    <citation type="journal article" date="2001" name="Nature">
        <title>Complete genome sequence of Salmonella enterica serovar Typhimurium LT2.</title>
        <authorList>
            <person name="McClelland M."/>
            <person name="Sanderson K.E."/>
            <person name="Spieth J."/>
            <person name="Clifton S.W."/>
            <person name="Latreille P."/>
            <person name="Courtney L."/>
            <person name="Porwollik S."/>
            <person name="Ali J."/>
            <person name="Dante M."/>
            <person name="Du F."/>
            <person name="Hou S."/>
            <person name="Layman D."/>
            <person name="Leonard S."/>
            <person name="Nguyen C."/>
            <person name="Scott K."/>
            <person name="Holmes A."/>
            <person name="Grewal N."/>
            <person name="Mulvaney E."/>
            <person name="Ryan E."/>
            <person name="Sun H."/>
            <person name="Florea L."/>
            <person name="Miller W."/>
            <person name="Stoneking T."/>
            <person name="Nhan M."/>
            <person name="Waterston R."/>
            <person name="Wilson R.K."/>
        </authorList>
    </citation>
    <scope>NUCLEOTIDE SEQUENCE [LARGE SCALE GENOMIC DNA]</scope>
    <source>
        <strain>LT2 / SGSC1412 / ATCC 700720</strain>
    </source>
</reference>
<reference key="4">
    <citation type="journal article" date="1989" name="Infect. Immun.">
        <title>A Salmonella typhimurium virulence gene linked to flg.</title>
        <authorList>
            <person name="Carsiotis M."/>
            <person name="Stocker B.A."/>
            <person name="Weinstein D.L."/>
            <person name="O'Brien A.D."/>
        </authorList>
    </citation>
    <scope>PROPOSED FUNCTION IN MOUSE VIRULENCE</scope>
    <source>
        <strain>LT2 / SL488</strain>
    </source>
</reference>
<reference key="5">
    <citation type="journal article" date="1994" name="J. Bacteriol.">
        <title>Mutation of flgM attenuates virulence of Salmonella typhimurium, and mutation of fliA represses the attenuated phenotype.</title>
        <authorList>
            <person name="Schmitt C.K."/>
            <person name="Darnell S.C."/>
            <person name="Tesh V.L."/>
            <person name="Stocker B.A.D."/>
            <person name="O'Brien A.D."/>
        </authorList>
    </citation>
    <scope>SHOWS THAT FLGM IS THE REAL MOUSE VIRULENCE GENE IN THIS REGION</scope>
    <source>
        <strain>SL3201</strain>
    </source>
</reference>
<evidence type="ECO:0000255" key="1">
    <source>
        <dbReference type="HAMAP-Rule" id="MF_02078"/>
    </source>
</evidence>
<evidence type="ECO:0000305" key="2">
    <source>
    </source>
</evidence>
<evidence type="ECO:0000305" key="3">
    <source>
    </source>
</evidence>
<keyword id="KW-0997">Cell inner membrane</keyword>
<keyword id="KW-1003">Cell membrane</keyword>
<keyword id="KW-0133">Cell shape</keyword>
<keyword id="KW-0961">Cell wall biogenesis/degradation</keyword>
<keyword id="KW-0472">Membrane</keyword>
<keyword id="KW-0573">Peptidoglycan synthesis</keyword>
<keyword id="KW-1185">Reference proteome</keyword>
<keyword id="KW-0812">Transmembrane</keyword>
<keyword id="KW-1133">Transmembrane helix</keyword>
<keyword id="KW-0813">Transport</keyword>